<reference key="1">
    <citation type="journal article" date="2009" name="J. Bacteriol.">
        <title>Complete genome sequence of the extremophilic Bacillus cereus strain Q1 with industrial applications.</title>
        <authorList>
            <person name="Xiong Z."/>
            <person name="Jiang Y."/>
            <person name="Qi D."/>
            <person name="Lu H."/>
            <person name="Yang F."/>
            <person name="Yang J."/>
            <person name="Chen L."/>
            <person name="Sun L."/>
            <person name="Xu X."/>
            <person name="Xue Y."/>
            <person name="Zhu Y."/>
            <person name="Jin Q."/>
        </authorList>
    </citation>
    <scope>NUCLEOTIDE SEQUENCE [LARGE SCALE GENOMIC DNA]</scope>
    <source>
        <strain>Q1</strain>
    </source>
</reference>
<proteinExistence type="inferred from homology"/>
<keyword id="KW-0067">ATP-binding</keyword>
<keyword id="KW-0963">Cytoplasm</keyword>
<keyword id="KW-1015">Disulfide bond</keyword>
<keyword id="KW-0547">Nucleotide-binding</keyword>
<keyword id="KW-0694">RNA-binding</keyword>
<keyword id="KW-0808">Transferase</keyword>
<keyword id="KW-0819">tRNA processing</keyword>
<keyword id="KW-0820">tRNA-binding</keyword>
<name>MNMA_BACCQ</name>
<protein>
    <recommendedName>
        <fullName evidence="1">tRNA-specific 2-thiouridylase MnmA</fullName>
        <ecNumber evidence="1">2.8.1.13</ecNumber>
    </recommendedName>
</protein>
<gene>
    <name evidence="1" type="primary">mnmA</name>
    <name type="ordered locus">BCQ_4180</name>
</gene>
<evidence type="ECO:0000255" key="1">
    <source>
        <dbReference type="HAMAP-Rule" id="MF_00144"/>
    </source>
</evidence>
<sequence>MNKLPHETRVVIGMSGGVDSSVAALLLKEQGYDVIGIFMKNWDDTDENGVCTATEDYNDVIEVCNQIGIPYYAVNFEKQYWDKVFTYFLDEYRAGRTPNPDVMCNKEIKFKAFLEHAIALGADYVATGHYARVAYMDGEYKMLRGVDDNKDQTYFLNQLSQEQLSKTMFPLGELKKPQIREMAKEAGLATAAKKDSTGICFIGERNFKDFLSNYLPAQPGVMQTLSGEVKGKHDGLMYYTIGQRHGLGIGGNGDPWFAVGKNLKENILYVDQGFHNELLYGDEVIATNVGWVSNEAKEKEFKCTAKFRYRQEDNKVTVQIVDENTVRILCDEPIRAITPGQAVVFYDGDECLGGATIDEVYRSGKKLDYLG</sequence>
<comment type="function">
    <text evidence="1">Catalyzes the 2-thiolation of uridine at the wobble position (U34) of tRNA, leading to the formation of s(2)U34.</text>
</comment>
<comment type="catalytic activity">
    <reaction evidence="1">
        <text>S-sulfanyl-L-cysteinyl-[protein] + uridine(34) in tRNA + AH2 + ATP = 2-thiouridine(34) in tRNA + L-cysteinyl-[protein] + A + AMP + diphosphate + H(+)</text>
        <dbReference type="Rhea" id="RHEA:47032"/>
        <dbReference type="Rhea" id="RHEA-COMP:10131"/>
        <dbReference type="Rhea" id="RHEA-COMP:11726"/>
        <dbReference type="Rhea" id="RHEA-COMP:11727"/>
        <dbReference type="Rhea" id="RHEA-COMP:11728"/>
        <dbReference type="ChEBI" id="CHEBI:13193"/>
        <dbReference type="ChEBI" id="CHEBI:15378"/>
        <dbReference type="ChEBI" id="CHEBI:17499"/>
        <dbReference type="ChEBI" id="CHEBI:29950"/>
        <dbReference type="ChEBI" id="CHEBI:30616"/>
        <dbReference type="ChEBI" id="CHEBI:33019"/>
        <dbReference type="ChEBI" id="CHEBI:61963"/>
        <dbReference type="ChEBI" id="CHEBI:65315"/>
        <dbReference type="ChEBI" id="CHEBI:87170"/>
        <dbReference type="ChEBI" id="CHEBI:456215"/>
        <dbReference type="EC" id="2.8.1.13"/>
    </reaction>
</comment>
<comment type="subcellular location">
    <subcellularLocation>
        <location evidence="1">Cytoplasm</location>
    </subcellularLocation>
</comment>
<comment type="similarity">
    <text evidence="1">Belongs to the MnmA/TRMU family.</text>
</comment>
<feature type="chain" id="PRO_1000198600" description="tRNA-specific 2-thiouridylase MnmA">
    <location>
        <begin position="1"/>
        <end position="371"/>
    </location>
</feature>
<feature type="region of interest" description="Interaction with target base in tRNA" evidence="1">
    <location>
        <begin position="99"/>
        <end position="101"/>
    </location>
</feature>
<feature type="region of interest" description="Interaction with tRNA" evidence="1">
    <location>
        <begin position="150"/>
        <end position="152"/>
    </location>
</feature>
<feature type="region of interest" description="Interaction with tRNA" evidence="1">
    <location>
        <begin position="308"/>
        <end position="309"/>
    </location>
</feature>
<feature type="active site" description="Nucleophile" evidence="1">
    <location>
        <position position="104"/>
    </location>
</feature>
<feature type="active site" description="Cysteine persulfide intermediate" evidence="1">
    <location>
        <position position="200"/>
    </location>
</feature>
<feature type="binding site" evidence="1">
    <location>
        <begin position="13"/>
        <end position="20"/>
    </location>
    <ligand>
        <name>ATP</name>
        <dbReference type="ChEBI" id="CHEBI:30616"/>
    </ligand>
</feature>
<feature type="binding site" evidence="1">
    <location>
        <position position="39"/>
    </location>
    <ligand>
        <name>ATP</name>
        <dbReference type="ChEBI" id="CHEBI:30616"/>
    </ligand>
</feature>
<feature type="binding site" evidence="1">
    <location>
        <position position="128"/>
    </location>
    <ligand>
        <name>ATP</name>
        <dbReference type="ChEBI" id="CHEBI:30616"/>
    </ligand>
</feature>
<feature type="site" description="Interaction with tRNA" evidence="1">
    <location>
        <position position="129"/>
    </location>
</feature>
<feature type="site" description="Interaction with tRNA" evidence="1">
    <location>
        <position position="341"/>
    </location>
</feature>
<feature type="disulfide bond" description="Alternate" evidence="1">
    <location>
        <begin position="104"/>
        <end position="200"/>
    </location>
</feature>
<accession>B9IYG1</accession>
<organism>
    <name type="scientific">Bacillus cereus (strain Q1)</name>
    <dbReference type="NCBI Taxonomy" id="361100"/>
    <lineage>
        <taxon>Bacteria</taxon>
        <taxon>Bacillati</taxon>
        <taxon>Bacillota</taxon>
        <taxon>Bacilli</taxon>
        <taxon>Bacillales</taxon>
        <taxon>Bacillaceae</taxon>
        <taxon>Bacillus</taxon>
        <taxon>Bacillus cereus group</taxon>
    </lineage>
</organism>
<dbReference type="EC" id="2.8.1.13" evidence="1"/>
<dbReference type="EMBL" id="CP000227">
    <property type="protein sequence ID" value="ACM14607.1"/>
    <property type="molecule type" value="Genomic_DNA"/>
</dbReference>
<dbReference type="SMR" id="B9IYG1"/>
<dbReference type="KEGG" id="bcq:BCQ_4180"/>
<dbReference type="HOGENOM" id="CLU_035188_1_0_9"/>
<dbReference type="Proteomes" id="UP000000441">
    <property type="component" value="Chromosome"/>
</dbReference>
<dbReference type="GO" id="GO:0005737">
    <property type="term" value="C:cytoplasm"/>
    <property type="evidence" value="ECO:0007669"/>
    <property type="project" value="UniProtKB-SubCell"/>
</dbReference>
<dbReference type="GO" id="GO:0005524">
    <property type="term" value="F:ATP binding"/>
    <property type="evidence" value="ECO:0007669"/>
    <property type="project" value="UniProtKB-KW"/>
</dbReference>
<dbReference type="GO" id="GO:0000049">
    <property type="term" value="F:tRNA binding"/>
    <property type="evidence" value="ECO:0007669"/>
    <property type="project" value="UniProtKB-KW"/>
</dbReference>
<dbReference type="GO" id="GO:0103016">
    <property type="term" value="F:tRNA-uridine 2-sulfurtransferase activity"/>
    <property type="evidence" value="ECO:0007669"/>
    <property type="project" value="UniProtKB-EC"/>
</dbReference>
<dbReference type="GO" id="GO:0002143">
    <property type="term" value="P:tRNA wobble position uridine thiolation"/>
    <property type="evidence" value="ECO:0007669"/>
    <property type="project" value="TreeGrafter"/>
</dbReference>
<dbReference type="CDD" id="cd01998">
    <property type="entry name" value="MnmA_TRMU-like"/>
    <property type="match status" value="1"/>
</dbReference>
<dbReference type="FunFam" id="2.30.30.280:FF:000001">
    <property type="entry name" value="tRNA-specific 2-thiouridylase MnmA"/>
    <property type="match status" value="1"/>
</dbReference>
<dbReference type="FunFam" id="2.40.30.10:FF:000023">
    <property type="entry name" value="tRNA-specific 2-thiouridylase MnmA"/>
    <property type="match status" value="1"/>
</dbReference>
<dbReference type="FunFam" id="3.40.50.620:FF:000004">
    <property type="entry name" value="tRNA-specific 2-thiouridylase MnmA"/>
    <property type="match status" value="1"/>
</dbReference>
<dbReference type="Gene3D" id="2.30.30.280">
    <property type="entry name" value="Adenine nucleotide alpha hydrolases-like domains"/>
    <property type="match status" value="1"/>
</dbReference>
<dbReference type="Gene3D" id="3.40.50.620">
    <property type="entry name" value="HUPs"/>
    <property type="match status" value="1"/>
</dbReference>
<dbReference type="Gene3D" id="2.40.30.10">
    <property type="entry name" value="Translation factors"/>
    <property type="match status" value="1"/>
</dbReference>
<dbReference type="HAMAP" id="MF_00144">
    <property type="entry name" value="tRNA_thiouridyl_MnmA"/>
    <property type="match status" value="1"/>
</dbReference>
<dbReference type="InterPro" id="IPR004506">
    <property type="entry name" value="MnmA-like"/>
</dbReference>
<dbReference type="InterPro" id="IPR046885">
    <property type="entry name" value="MnmA-like_C"/>
</dbReference>
<dbReference type="InterPro" id="IPR046884">
    <property type="entry name" value="MnmA-like_central"/>
</dbReference>
<dbReference type="InterPro" id="IPR023382">
    <property type="entry name" value="MnmA-like_central_sf"/>
</dbReference>
<dbReference type="InterPro" id="IPR014729">
    <property type="entry name" value="Rossmann-like_a/b/a_fold"/>
</dbReference>
<dbReference type="NCBIfam" id="NF001138">
    <property type="entry name" value="PRK00143.1"/>
    <property type="match status" value="1"/>
</dbReference>
<dbReference type="NCBIfam" id="TIGR00420">
    <property type="entry name" value="trmU"/>
    <property type="match status" value="1"/>
</dbReference>
<dbReference type="PANTHER" id="PTHR11933:SF5">
    <property type="entry name" value="MITOCHONDRIAL TRNA-SPECIFIC 2-THIOURIDYLASE 1"/>
    <property type="match status" value="1"/>
</dbReference>
<dbReference type="PANTHER" id="PTHR11933">
    <property type="entry name" value="TRNA 5-METHYLAMINOMETHYL-2-THIOURIDYLATE -METHYLTRANSFERASE"/>
    <property type="match status" value="1"/>
</dbReference>
<dbReference type="Pfam" id="PF03054">
    <property type="entry name" value="tRNA_Me_trans"/>
    <property type="match status" value="1"/>
</dbReference>
<dbReference type="Pfam" id="PF20258">
    <property type="entry name" value="tRNA_Me_trans_C"/>
    <property type="match status" value="1"/>
</dbReference>
<dbReference type="Pfam" id="PF20259">
    <property type="entry name" value="tRNA_Me_trans_M"/>
    <property type="match status" value="1"/>
</dbReference>
<dbReference type="SUPFAM" id="SSF52402">
    <property type="entry name" value="Adenine nucleotide alpha hydrolases-like"/>
    <property type="match status" value="1"/>
</dbReference>